<accession>Q8R9N6</accession>
<dbReference type="EC" id="2.3.1.286" evidence="1 2"/>
<dbReference type="EMBL" id="AE008691">
    <property type="protein sequence ID" value="AAM24774.1"/>
    <property type="molecule type" value="Genomic_DNA"/>
</dbReference>
<dbReference type="RefSeq" id="WP_009610098.1">
    <property type="nucleotide sequence ID" value="NC_003869.1"/>
</dbReference>
<dbReference type="SMR" id="Q8R9N6"/>
<dbReference type="STRING" id="273068.TTE1570"/>
<dbReference type="KEGG" id="tte:TTE1570"/>
<dbReference type="eggNOG" id="COG0846">
    <property type="taxonomic scope" value="Bacteria"/>
</dbReference>
<dbReference type="HOGENOM" id="CLU_023643_3_1_9"/>
<dbReference type="OrthoDB" id="9800582at2"/>
<dbReference type="Proteomes" id="UP000000555">
    <property type="component" value="Chromosome"/>
</dbReference>
<dbReference type="GO" id="GO:0005737">
    <property type="term" value="C:cytoplasm"/>
    <property type="evidence" value="ECO:0007669"/>
    <property type="project" value="UniProtKB-SubCell"/>
</dbReference>
<dbReference type="GO" id="GO:0017136">
    <property type="term" value="F:histone deacetylase activity, NAD-dependent"/>
    <property type="evidence" value="ECO:0007669"/>
    <property type="project" value="TreeGrafter"/>
</dbReference>
<dbReference type="GO" id="GO:0070403">
    <property type="term" value="F:NAD+ binding"/>
    <property type="evidence" value="ECO:0007669"/>
    <property type="project" value="UniProtKB-UniRule"/>
</dbReference>
<dbReference type="GO" id="GO:0036054">
    <property type="term" value="F:protein-malonyllysine demalonylase activity"/>
    <property type="evidence" value="ECO:0007669"/>
    <property type="project" value="InterPro"/>
</dbReference>
<dbReference type="GO" id="GO:0036055">
    <property type="term" value="F:protein-succinyllysine desuccinylase activity"/>
    <property type="evidence" value="ECO:0007669"/>
    <property type="project" value="UniProtKB-UniRule"/>
</dbReference>
<dbReference type="GO" id="GO:0008270">
    <property type="term" value="F:zinc ion binding"/>
    <property type="evidence" value="ECO:0007669"/>
    <property type="project" value="UniProtKB-UniRule"/>
</dbReference>
<dbReference type="CDD" id="cd01412">
    <property type="entry name" value="SIRT5_Af1_CobB"/>
    <property type="match status" value="1"/>
</dbReference>
<dbReference type="Gene3D" id="3.30.1600.10">
    <property type="entry name" value="SIR2/SIRT2 'Small Domain"/>
    <property type="match status" value="1"/>
</dbReference>
<dbReference type="Gene3D" id="3.40.50.1220">
    <property type="entry name" value="TPP-binding domain"/>
    <property type="match status" value="1"/>
</dbReference>
<dbReference type="HAMAP" id="MF_01121">
    <property type="entry name" value="Sirtuin_ClassIII"/>
    <property type="match status" value="1"/>
</dbReference>
<dbReference type="InterPro" id="IPR029035">
    <property type="entry name" value="DHS-like_NAD/FAD-binding_dom"/>
</dbReference>
<dbReference type="InterPro" id="IPR050134">
    <property type="entry name" value="NAD-dep_sirtuin_deacylases"/>
</dbReference>
<dbReference type="InterPro" id="IPR003000">
    <property type="entry name" value="Sirtuin"/>
</dbReference>
<dbReference type="InterPro" id="IPR026591">
    <property type="entry name" value="Sirtuin_cat_small_dom_sf"/>
</dbReference>
<dbReference type="InterPro" id="IPR027546">
    <property type="entry name" value="Sirtuin_class_III"/>
</dbReference>
<dbReference type="InterPro" id="IPR026590">
    <property type="entry name" value="Ssirtuin_cat_dom"/>
</dbReference>
<dbReference type="NCBIfam" id="NF001753">
    <property type="entry name" value="PRK00481.1-3"/>
    <property type="match status" value="1"/>
</dbReference>
<dbReference type="PANTHER" id="PTHR11085:SF4">
    <property type="entry name" value="NAD-DEPENDENT PROTEIN DEACYLASE"/>
    <property type="match status" value="1"/>
</dbReference>
<dbReference type="PANTHER" id="PTHR11085">
    <property type="entry name" value="NAD-DEPENDENT PROTEIN DEACYLASE SIRTUIN-5, MITOCHONDRIAL-RELATED"/>
    <property type="match status" value="1"/>
</dbReference>
<dbReference type="Pfam" id="PF02146">
    <property type="entry name" value="SIR2"/>
    <property type="match status" value="1"/>
</dbReference>
<dbReference type="SUPFAM" id="SSF52467">
    <property type="entry name" value="DHS-like NAD/FAD-binding domain"/>
    <property type="match status" value="1"/>
</dbReference>
<dbReference type="PROSITE" id="PS50305">
    <property type="entry name" value="SIRTUIN"/>
    <property type="match status" value="1"/>
</dbReference>
<name>NPD1_CALS4</name>
<feature type="chain" id="PRO_0000110365" description="NAD-dependent protein deacylase 1">
    <location>
        <begin position="1"/>
        <end position="242"/>
    </location>
</feature>
<feature type="domain" description="Deacetylase sirtuin-type" evidence="2">
    <location>
        <begin position="1"/>
        <end position="242"/>
    </location>
</feature>
<feature type="active site" description="Proton acceptor" evidence="2">
    <location>
        <position position="117"/>
    </location>
</feature>
<feature type="binding site" evidence="1">
    <location>
        <begin position="21"/>
        <end position="40"/>
    </location>
    <ligand>
        <name>NAD(+)</name>
        <dbReference type="ChEBI" id="CHEBI:57540"/>
    </ligand>
</feature>
<feature type="binding site" evidence="1">
    <location>
        <position position="65"/>
    </location>
    <ligand>
        <name>substrate</name>
    </ligand>
</feature>
<feature type="binding site" evidence="1">
    <location>
        <position position="68"/>
    </location>
    <ligand>
        <name>substrate</name>
    </ligand>
</feature>
<feature type="binding site" evidence="1">
    <location>
        <begin position="99"/>
        <end position="102"/>
    </location>
    <ligand>
        <name>NAD(+)</name>
        <dbReference type="ChEBI" id="CHEBI:57540"/>
    </ligand>
</feature>
<feature type="binding site" evidence="1">
    <location>
        <position position="125"/>
    </location>
    <ligand>
        <name>Zn(2+)</name>
        <dbReference type="ChEBI" id="CHEBI:29105"/>
    </ligand>
</feature>
<feature type="binding site" evidence="1">
    <location>
        <position position="128"/>
    </location>
    <ligand>
        <name>Zn(2+)</name>
        <dbReference type="ChEBI" id="CHEBI:29105"/>
    </ligand>
</feature>
<feature type="binding site" evidence="1">
    <location>
        <position position="146"/>
    </location>
    <ligand>
        <name>Zn(2+)</name>
        <dbReference type="ChEBI" id="CHEBI:29105"/>
    </ligand>
</feature>
<feature type="binding site" evidence="1">
    <location>
        <position position="149"/>
    </location>
    <ligand>
        <name>Zn(2+)</name>
        <dbReference type="ChEBI" id="CHEBI:29105"/>
    </ligand>
</feature>
<feature type="binding site" evidence="1">
    <location>
        <begin position="186"/>
        <end position="188"/>
    </location>
    <ligand>
        <name>NAD(+)</name>
        <dbReference type="ChEBI" id="CHEBI:57540"/>
    </ligand>
</feature>
<feature type="binding site" evidence="1">
    <location>
        <position position="241"/>
    </location>
    <ligand>
        <name>NAD(+)</name>
        <dbReference type="ChEBI" id="CHEBI:57540"/>
    </ligand>
</feature>
<comment type="function">
    <text evidence="1">NAD-dependent lysine deacetylase and desuccinylase that specifically removes acetyl and succinyl groups on target proteins. Modulates the activities of several proteins which are inactive in their acylated form.</text>
</comment>
<comment type="catalytic activity">
    <reaction evidence="1">
        <text>N(6)-acetyl-L-lysyl-[protein] + NAD(+) + H2O = 2''-O-acetyl-ADP-D-ribose + nicotinamide + L-lysyl-[protein]</text>
        <dbReference type="Rhea" id="RHEA:43636"/>
        <dbReference type="Rhea" id="RHEA-COMP:9752"/>
        <dbReference type="Rhea" id="RHEA-COMP:10731"/>
        <dbReference type="ChEBI" id="CHEBI:15377"/>
        <dbReference type="ChEBI" id="CHEBI:17154"/>
        <dbReference type="ChEBI" id="CHEBI:29969"/>
        <dbReference type="ChEBI" id="CHEBI:57540"/>
        <dbReference type="ChEBI" id="CHEBI:61930"/>
        <dbReference type="ChEBI" id="CHEBI:83767"/>
        <dbReference type="EC" id="2.3.1.286"/>
    </reaction>
</comment>
<comment type="catalytic activity">
    <reaction evidence="1">
        <text>N(6)-succinyl-L-lysyl-[protein] + NAD(+) + H2O = 2''-O-succinyl-ADP-D-ribose + nicotinamide + L-lysyl-[protein]</text>
        <dbReference type="Rhea" id="RHEA:47668"/>
        <dbReference type="Rhea" id="RHEA-COMP:9752"/>
        <dbReference type="Rhea" id="RHEA-COMP:11877"/>
        <dbReference type="ChEBI" id="CHEBI:15377"/>
        <dbReference type="ChEBI" id="CHEBI:17154"/>
        <dbReference type="ChEBI" id="CHEBI:29969"/>
        <dbReference type="ChEBI" id="CHEBI:57540"/>
        <dbReference type="ChEBI" id="CHEBI:87830"/>
        <dbReference type="ChEBI" id="CHEBI:87832"/>
    </reaction>
</comment>
<comment type="cofactor">
    <cofactor evidence="1">
        <name>Zn(2+)</name>
        <dbReference type="ChEBI" id="CHEBI:29105"/>
    </cofactor>
    <text evidence="1">Binds 1 zinc ion per subunit.</text>
</comment>
<comment type="subcellular location">
    <subcellularLocation>
        <location evidence="1">Cytoplasm</location>
    </subcellularLocation>
</comment>
<comment type="domain">
    <text evidence="1">2 residues (Tyr-65 and Arg-68) present in a large hydrophobic pocket are probably involved in substrate specificity. They are important for desuccinylation activity, but dispensable for deacetylation activity.</text>
</comment>
<comment type="similarity">
    <text evidence="1">Belongs to the sirtuin family. Class III subfamily.</text>
</comment>
<reference key="1">
    <citation type="journal article" date="2002" name="Genome Res.">
        <title>A complete sequence of the T. tengcongensis genome.</title>
        <authorList>
            <person name="Bao Q."/>
            <person name="Tian Y."/>
            <person name="Li W."/>
            <person name="Xu Z."/>
            <person name="Xuan Z."/>
            <person name="Hu S."/>
            <person name="Dong W."/>
            <person name="Yang J."/>
            <person name="Chen Y."/>
            <person name="Xue Y."/>
            <person name="Xu Y."/>
            <person name="Lai X."/>
            <person name="Huang L."/>
            <person name="Dong X."/>
            <person name="Ma Y."/>
            <person name="Ling L."/>
            <person name="Tan H."/>
            <person name="Chen R."/>
            <person name="Wang J."/>
            <person name="Yu J."/>
            <person name="Yang H."/>
        </authorList>
    </citation>
    <scope>NUCLEOTIDE SEQUENCE [LARGE SCALE GENOMIC DNA]</scope>
    <source>
        <strain>DSM 15242 / JCM 11007 / NBRC 100824 / MB4</strain>
    </source>
</reference>
<protein>
    <recommendedName>
        <fullName evidence="1">NAD-dependent protein deacylase 1</fullName>
        <ecNumber evidence="1 2">2.3.1.286</ecNumber>
    </recommendedName>
    <alternativeName>
        <fullName evidence="1">Regulatory protein SIR2 homolog 1</fullName>
    </alternativeName>
</protein>
<evidence type="ECO:0000255" key="1">
    <source>
        <dbReference type="HAMAP-Rule" id="MF_01121"/>
    </source>
</evidence>
<evidence type="ECO:0000255" key="2">
    <source>
        <dbReference type="PROSITE-ProRule" id="PRU00236"/>
    </source>
</evidence>
<gene>
    <name evidence="1" type="primary">cobB1</name>
    <name type="ordered locus">TTE1570</name>
</gene>
<sequence length="242" mass="27403">MDFKILKEKLPQSNLTVVLTGAGISKESGIPTFRGEDGLWKKYNPEELATPWAFQRNPALVWEWYDYRRRIISKAKPNKCHLLIAEFEERFKNVRVITQNVDGLHEAAGSTNVIELHGNIWKVKCTKCDFRGINREVPLSKIPPECPKCGSIVRPDVVWFGEPLPSDKLTEAMELSQRADLFIVIGTSLMVQPAASLPFLALERGAFVVEVSPEETPLSRKAHLFFQMGAVEFAMKFEEKEG</sequence>
<organism>
    <name type="scientific">Caldanaerobacter subterraneus subsp. tengcongensis (strain DSM 15242 / JCM 11007 / NBRC 100824 / MB4)</name>
    <name type="common">Thermoanaerobacter tengcongensis</name>
    <dbReference type="NCBI Taxonomy" id="273068"/>
    <lineage>
        <taxon>Bacteria</taxon>
        <taxon>Bacillati</taxon>
        <taxon>Bacillota</taxon>
        <taxon>Clostridia</taxon>
        <taxon>Thermoanaerobacterales</taxon>
        <taxon>Thermoanaerobacteraceae</taxon>
        <taxon>Caldanaerobacter</taxon>
    </lineage>
</organism>
<keyword id="KW-0963">Cytoplasm</keyword>
<keyword id="KW-0479">Metal-binding</keyword>
<keyword id="KW-0520">NAD</keyword>
<keyword id="KW-1185">Reference proteome</keyword>
<keyword id="KW-0808">Transferase</keyword>
<keyword id="KW-0862">Zinc</keyword>
<proteinExistence type="inferred from homology"/>